<accession>Q7G191</accession>
<accession>O23027</accession>
<accession>O49157</accession>
<accession>Q7GB29</accession>
<gene>
    <name evidence="9" type="primary">AAO4</name>
    <name evidence="10" type="synonym">AO2</name>
    <name evidence="13" type="ordered locus">At1g04580</name>
    <name evidence="14" type="ORF">T1G11.17</name>
</gene>
<proteinExistence type="evidence at protein level"/>
<sequence length="1337" mass="147304">MAGDDLVFAVNGEKFEVLSVNPSTTLLEFLRSNTCFKSVKLSCGEGGCGACIVILSKYDPVLDQVEEYSINSCLTLLCSLNGCSITTSDGLGNTEKGFHPIHKRFAGFHASQCGFCTPGMCISLYSALSKAHNSQSSPDYLTALAAEKSIAGNLCRCTGYRPIADACKSFASDVDIEDLGFNSFWRKGESREEMLKKLPPYNPEKDLITFPDFLKEKIKCQHNVLDQTRYHWSTPGSVAELQEILATTNPGKDRGLIKLVVGNTGTGYYKEEKQYGRYIDISHIPEMSMIKKDDREIEIGAVVTISKVIDALMEENTSAYVFKKIGVHMEKVANHFIRNSGSIGGNLVMAQSKSFPSDITTLLLAADASVHMINAGRHEKLRMGEYLVSPPILDTKTVLLKVHIPRWIASSTTGLLFETYRAALRPIGSALPYINAAFLAVVSHDASSSGIIVDKCRLAFGSYGGYHSIRAREVEDFLTGKILSHSVLYEAVRLLKGIIVPSIDTSYSEYKKSLAVGFLFDFLYPLIESGSWDSEGKHIDGHIDPTICLPLLSSAQQVFESKEYHPVGEAIIKFGAEMQASGEAVYVDDIPSLPHCLHGAFIYSTKPLAWIKSVGFSGNVTPIGVLAVITFKDIPEVGQNIGYITMFGTGLLFADEVTISAGQIIALVVADTQKHADMAAHLAVVEYDSRNIGTPVLSVEDAVKRSSLFEVPPEYQPEPVGDISKGMAEADRKIRSVELRLGSQYFFYMETQTALALPDEDNCLVVYSSTQAPEFTQTVIATCLGIPEHNVRVITRRVGGGFGGKAIKSMPVATACALAAKKMQRPVRIYVNRKTDMIMAGGRHPLKITYSVGFRSDGKLTALDLNLFIDAGSDVDVSLVMPQNIMNSLRKYDWGALSFDIKVCKTNLPSRTSLRAPGEVQGSYIAESIIENVASSLKMDVDVVRRINLHTYESLRKFYKQAAGEPDEYTLPLLWDKLEVSADFRRRAESVKEFNRCNIWRKRGISRVPIIHLVIHRPTPGKVSILNDGSVAVEVAGIEVGQGLWTKVQQMVAYGLGMIKCEGSDDLLERIRLLQTDTLSMSQSSYTAGSTTSENCCEAVRLCCGILVERLRPTMNQILENARSVTWDMLIQQANAQSVDLSARTFYKPESSSAEYLNYGVGASEVEVDLVTGRTEIIRSDIIYDCGKSLNPAVDLGQIEGAFVQGIGFFMYEEYTTNENGLVNEEGTWDYKIPTIDTIPKQFNVQILNSGHHKNRVLSSKASGEPPLLVAASVHCATRSAIREARKQYLSWNCIDDDHRERCDLGFELPVPATMPVVKQLCGLESIEKYLEWKTYP</sequence>
<dbReference type="EC" id="1.2.3.1" evidence="7 8"/>
<dbReference type="EC" id="1.2.3.7" evidence="7"/>
<dbReference type="EMBL" id="AB037271">
    <property type="protein sequence ID" value="BAA90299.1"/>
    <property type="molecule type" value="mRNA"/>
</dbReference>
<dbReference type="EMBL" id="AC002376">
    <property type="protein sequence ID" value="AAB80640.1"/>
    <property type="status" value="ALT_SEQ"/>
    <property type="molecule type" value="Genomic_DNA"/>
</dbReference>
<dbReference type="EMBL" id="CP002684">
    <property type="protein sequence ID" value="AEE27717.1"/>
    <property type="molecule type" value="Genomic_DNA"/>
</dbReference>
<dbReference type="EMBL" id="AF039897">
    <property type="protein sequence ID" value="AAC39511.1"/>
    <property type="molecule type" value="mRNA"/>
</dbReference>
<dbReference type="PIR" id="D86178">
    <property type="entry name" value="D86178"/>
</dbReference>
<dbReference type="PIR" id="T52051">
    <property type="entry name" value="T52051"/>
</dbReference>
<dbReference type="RefSeq" id="NP_563711.1">
    <property type="nucleotide sequence ID" value="NM_100337.3"/>
</dbReference>
<dbReference type="SMR" id="Q7G191"/>
<dbReference type="FunCoup" id="Q7G191">
    <property type="interactions" value="17"/>
</dbReference>
<dbReference type="STRING" id="3702.Q7G191"/>
<dbReference type="iPTMnet" id="Q7G191"/>
<dbReference type="PaxDb" id="3702-AT1G04580.1"/>
<dbReference type="ProteomicsDB" id="244968"/>
<dbReference type="EnsemblPlants" id="AT1G04580.1">
    <property type="protein sequence ID" value="AT1G04580.1"/>
    <property type="gene ID" value="AT1G04580"/>
</dbReference>
<dbReference type="GeneID" id="839488"/>
<dbReference type="Gramene" id="AT1G04580.1">
    <property type="protein sequence ID" value="AT1G04580.1"/>
    <property type="gene ID" value="AT1G04580"/>
</dbReference>
<dbReference type="KEGG" id="ath:AT1G04580"/>
<dbReference type="Araport" id="AT1G04580"/>
<dbReference type="TAIR" id="AT1G04580">
    <property type="gene designation" value="AO4"/>
</dbReference>
<dbReference type="eggNOG" id="KOG0430">
    <property type="taxonomic scope" value="Eukaryota"/>
</dbReference>
<dbReference type="HOGENOM" id="CLU_001681_1_1_1"/>
<dbReference type="InParanoid" id="Q7G191"/>
<dbReference type="OMA" id="TPGWVMQ"/>
<dbReference type="PhylomeDB" id="Q7G191"/>
<dbReference type="BioCyc" id="ARA:AT1G04580-MONOMER"/>
<dbReference type="BioCyc" id="MetaCyc:AT1G04580-MONOMER"/>
<dbReference type="BRENDA" id="1.2.3.1">
    <property type="organism ID" value="399"/>
</dbReference>
<dbReference type="CD-CODE" id="4299E36E">
    <property type="entry name" value="Nucleolus"/>
</dbReference>
<dbReference type="PRO" id="PR:Q7G191"/>
<dbReference type="Proteomes" id="UP000006548">
    <property type="component" value="Chromosome 1"/>
</dbReference>
<dbReference type="ExpressionAtlas" id="Q7G191">
    <property type="expression patterns" value="baseline and differential"/>
</dbReference>
<dbReference type="GO" id="GO:0005829">
    <property type="term" value="C:cytosol"/>
    <property type="evidence" value="ECO:0000304"/>
    <property type="project" value="TAIR"/>
</dbReference>
<dbReference type="GO" id="GO:0051537">
    <property type="term" value="F:2 iron, 2 sulfur cluster binding"/>
    <property type="evidence" value="ECO:0007669"/>
    <property type="project" value="UniProtKB-KW"/>
</dbReference>
<dbReference type="GO" id="GO:0004031">
    <property type="term" value="F:aldehyde oxidase activity"/>
    <property type="evidence" value="ECO:0000315"/>
    <property type="project" value="UniProtKB"/>
</dbReference>
<dbReference type="GO" id="GO:0018488">
    <property type="term" value="F:aryl-aldehyde oxidase activity"/>
    <property type="evidence" value="ECO:0000314"/>
    <property type="project" value="TAIR"/>
</dbReference>
<dbReference type="GO" id="GO:0018479">
    <property type="term" value="F:benzaldehyde dehydrogenase (NAD+) activity"/>
    <property type="evidence" value="ECO:0000314"/>
    <property type="project" value="TAIR"/>
</dbReference>
<dbReference type="GO" id="GO:0071949">
    <property type="term" value="F:FAD binding"/>
    <property type="evidence" value="ECO:0007669"/>
    <property type="project" value="InterPro"/>
</dbReference>
<dbReference type="GO" id="GO:0050302">
    <property type="term" value="F:indole-3-acetaldehyde oxidase activity"/>
    <property type="evidence" value="ECO:0007669"/>
    <property type="project" value="UniProtKB-EC"/>
</dbReference>
<dbReference type="GO" id="GO:0005506">
    <property type="term" value="F:iron ion binding"/>
    <property type="evidence" value="ECO:0007669"/>
    <property type="project" value="InterPro"/>
</dbReference>
<dbReference type="GO" id="GO:0009688">
    <property type="term" value="P:abscisic acid biosynthetic process"/>
    <property type="evidence" value="ECO:0007669"/>
    <property type="project" value="UniProtKB-KW"/>
</dbReference>
<dbReference type="GO" id="GO:0009851">
    <property type="term" value="P:auxin biosynthetic process"/>
    <property type="evidence" value="ECO:0007669"/>
    <property type="project" value="UniProtKB-KW"/>
</dbReference>
<dbReference type="GO" id="GO:0110096">
    <property type="term" value="P:cellular response to aldehyde"/>
    <property type="evidence" value="ECO:0000270"/>
    <property type="project" value="UniProtKB"/>
</dbReference>
<dbReference type="GO" id="GO:0019760">
    <property type="term" value="P:glucosinolate metabolic process"/>
    <property type="evidence" value="ECO:0000315"/>
    <property type="project" value="TAIR"/>
</dbReference>
<dbReference type="GO" id="GO:0042542">
    <property type="term" value="P:response to hydrogen peroxide"/>
    <property type="evidence" value="ECO:0000270"/>
    <property type="project" value="UniProtKB"/>
</dbReference>
<dbReference type="GO" id="GO:0009414">
    <property type="term" value="P:response to water deprivation"/>
    <property type="evidence" value="ECO:0000270"/>
    <property type="project" value="UniProtKB"/>
</dbReference>
<dbReference type="CDD" id="cd00207">
    <property type="entry name" value="fer2"/>
    <property type="match status" value="1"/>
</dbReference>
<dbReference type="FunFam" id="1.10.150.120:FF:000006">
    <property type="entry name" value="Aldehyde oxidase"/>
    <property type="match status" value="1"/>
</dbReference>
<dbReference type="FunFam" id="3.30.365.10:FF:000029">
    <property type="entry name" value="Aldehyde oxidase"/>
    <property type="match status" value="1"/>
</dbReference>
<dbReference type="FunFam" id="3.90.1170.50:FF:000003">
    <property type="entry name" value="Aldehyde oxidase"/>
    <property type="match status" value="1"/>
</dbReference>
<dbReference type="FunFam" id="3.30.43.10:FF:000026">
    <property type="entry name" value="Aldehyde oxidase 4"/>
    <property type="match status" value="1"/>
</dbReference>
<dbReference type="FunFam" id="3.30.365.10:FF:000001">
    <property type="entry name" value="Xanthine dehydrogenase oxidase"/>
    <property type="match status" value="1"/>
</dbReference>
<dbReference type="FunFam" id="3.10.20.30:FF:000012">
    <property type="entry name" value="Xanthine dehydrogenase/oxidase"/>
    <property type="match status" value="1"/>
</dbReference>
<dbReference type="Gene3D" id="3.10.20.30">
    <property type="match status" value="1"/>
</dbReference>
<dbReference type="Gene3D" id="3.30.465.10">
    <property type="match status" value="1"/>
</dbReference>
<dbReference type="Gene3D" id="1.10.150.120">
    <property type="entry name" value="[2Fe-2S]-binding domain"/>
    <property type="match status" value="1"/>
</dbReference>
<dbReference type="Gene3D" id="3.90.1170.50">
    <property type="entry name" value="Aldehyde oxidase/xanthine dehydrogenase, a/b hammerhead"/>
    <property type="match status" value="1"/>
</dbReference>
<dbReference type="Gene3D" id="3.30.365.10">
    <property type="entry name" value="Aldehyde oxidase/xanthine dehydrogenase, molybdopterin binding domain"/>
    <property type="match status" value="4"/>
</dbReference>
<dbReference type="Gene3D" id="3.30.390.50">
    <property type="entry name" value="CO dehydrogenase flavoprotein, C-terminal domain"/>
    <property type="match status" value="1"/>
</dbReference>
<dbReference type="Gene3D" id="3.30.43.10">
    <property type="entry name" value="Uridine Diphospho-n-acetylenolpyruvylglucosamine Reductase, domain 2"/>
    <property type="match status" value="1"/>
</dbReference>
<dbReference type="InterPro" id="IPR002888">
    <property type="entry name" value="2Fe-2S-bd"/>
</dbReference>
<dbReference type="InterPro" id="IPR036884">
    <property type="entry name" value="2Fe-2S-bd_dom_sf"/>
</dbReference>
<dbReference type="InterPro" id="IPR036010">
    <property type="entry name" value="2Fe-2S_ferredoxin-like_sf"/>
</dbReference>
<dbReference type="InterPro" id="IPR001041">
    <property type="entry name" value="2Fe-2S_ferredoxin-type"/>
</dbReference>
<dbReference type="InterPro" id="IPR006058">
    <property type="entry name" value="2Fe2S_fd_BS"/>
</dbReference>
<dbReference type="InterPro" id="IPR000674">
    <property type="entry name" value="Ald_Oxase/Xan_DH_a/b"/>
</dbReference>
<dbReference type="InterPro" id="IPR036856">
    <property type="entry name" value="Ald_Oxase/Xan_DH_a/b_sf"/>
</dbReference>
<dbReference type="InterPro" id="IPR016208">
    <property type="entry name" value="Ald_Oxase/xanthine_DH-like"/>
</dbReference>
<dbReference type="InterPro" id="IPR008274">
    <property type="entry name" value="AldOxase/xan_DH_MoCoBD1"/>
</dbReference>
<dbReference type="InterPro" id="IPR046867">
    <property type="entry name" value="AldOxase/xan_DH_MoCoBD2"/>
</dbReference>
<dbReference type="InterPro" id="IPR037165">
    <property type="entry name" value="AldOxase/xan_DH_Mopterin-bd_sf"/>
</dbReference>
<dbReference type="InterPro" id="IPR012675">
    <property type="entry name" value="Beta-grasp_dom_sf"/>
</dbReference>
<dbReference type="InterPro" id="IPR005107">
    <property type="entry name" value="CO_DH_flav_C"/>
</dbReference>
<dbReference type="InterPro" id="IPR036683">
    <property type="entry name" value="CO_DH_flav_C_dom_sf"/>
</dbReference>
<dbReference type="InterPro" id="IPR016166">
    <property type="entry name" value="FAD-bd_PCMH"/>
</dbReference>
<dbReference type="InterPro" id="IPR036318">
    <property type="entry name" value="FAD-bd_PCMH-like_sf"/>
</dbReference>
<dbReference type="InterPro" id="IPR016167">
    <property type="entry name" value="FAD-bd_PCMH_sub1"/>
</dbReference>
<dbReference type="InterPro" id="IPR016169">
    <property type="entry name" value="FAD-bd_PCMH_sub2"/>
</dbReference>
<dbReference type="InterPro" id="IPR002346">
    <property type="entry name" value="Mopterin_DH_FAD-bd"/>
</dbReference>
<dbReference type="PANTHER" id="PTHR11908:SF140">
    <property type="entry name" value="ALDEHYDE OXIDASE 4"/>
    <property type="match status" value="1"/>
</dbReference>
<dbReference type="PANTHER" id="PTHR11908">
    <property type="entry name" value="XANTHINE DEHYDROGENASE"/>
    <property type="match status" value="1"/>
</dbReference>
<dbReference type="Pfam" id="PF01315">
    <property type="entry name" value="Ald_Xan_dh_C"/>
    <property type="match status" value="1"/>
</dbReference>
<dbReference type="Pfam" id="PF03450">
    <property type="entry name" value="CO_deh_flav_C"/>
    <property type="match status" value="1"/>
</dbReference>
<dbReference type="Pfam" id="PF00941">
    <property type="entry name" value="FAD_binding_5"/>
    <property type="match status" value="1"/>
</dbReference>
<dbReference type="Pfam" id="PF00111">
    <property type="entry name" value="Fer2"/>
    <property type="match status" value="1"/>
</dbReference>
<dbReference type="Pfam" id="PF01799">
    <property type="entry name" value="Fer2_2"/>
    <property type="match status" value="1"/>
</dbReference>
<dbReference type="Pfam" id="PF02738">
    <property type="entry name" value="MoCoBD_1"/>
    <property type="match status" value="1"/>
</dbReference>
<dbReference type="Pfam" id="PF20256">
    <property type="entry name" value="MoCoBD_2"/>
    <property type="match status" value="1"/>
</dbReference>
<dbReference type="PIRSF" id="PIRSF000127">
    <property type="entry name" value="Xanthine_DH"/>
    <property type="match status" value="1"/>
</dbReference>
<dbReference type="SMART" id="SM01008">
    <property type="entry name" value="Ald_Xan_dh_C"/>
    <property type="match status" value="1"/>
</dbReference>
<dbReference type="SMART" id="SM01092">
    <property type="entry name" value="CO_deh_flav_C"/>
    <property type="match status" value="1"/>
</dbReference>
<dbReference type="SUPFAM" id="SSF54292">
    <property type="entry name" value="2Fe-2S ferredoxin-like"/>
    <property type="match status" value="1"/>
</dbReference>
<dbReference type="SUPFAM" id="SSF55447">
    <property type="entry name" value="CO dehydrogenase flavoprotein C-terminal domain-like"/>
    <property type="match status" value="1"/>
</dbReference>
<dbReference type="SUPFAM" id="SSF47741">
    <property type="entry name" value="CO dehydrogenase ISP C-domain like"/>
    <property type="match status" value="1"/>
</dbReference>
<dbReference type="SUPFAM" id="SSF54665">
    <property type="entry name" value="CO dehydrogenase molybdoprotein N-domain-like"/>
    <property type="match status" value="1"/>
</dbReference>
<dbReference type="SUPFAM" id="SSF56176">
    <property type="entry name" value="FAD-binding/transporter-associated domain-like"/>
    <property type="match status" value="1"/>
</dbReference>
<dbReference type="SUPFAM" id="SSF56003">
    <property type="entry name" value="Molybdenum cofactor-binding domain"/>
    <property type="match status" value="1"/>
</dbReference>
<dbReference type="PROSITE" id="PS00197">
    <property type="entry name" value="2FE2S_FER_1"/>
    <property type="match status" value="1"/>
</dbReference>
<dbReference type="PROSITE" id="PS51085">
    <property type="entry name" value="2FE2S_FER_2"/>
    <property type="match status" value="1"/>
</dbReference>
<dbReference type="PROSITE" id="PS51387">
    <property type="entry name" value="FAD_PCMH"/>
    <property type="match status" value="1"/>
</dbReference>
<feature type="chain" id="PRO_0000166112" description="Aldehyde oxidase 4">
    <location>
        <begin position="1"/>
        <end position="1337"/>
    </location>
</feature>
<feature type="domain" description="2Fe-2S ferredoxin-type" evidence="3">
    <location>
        <begin position="4"/>
        <end position="91"/>
    </location>
</feature>
<feature type="domain" description="FAD-binding PCMH-type" evidence="4">
    <location>
        <begin position="225"/>
        <end position="409"/>
    </location>
</feature>
<feature type="active site" description="Proton acceptor" evidence="1">
    <location>
        <position position="1265"/>
    </location>
</feature>
<feature type="binding site" evidence="3">
    <location>
        <position position="43"/>
    </location>
    <ligand>
        <name>[2Fe-2S] cluster</name>
        <dbReference type="ChEBI" id="CHEBI:190135"/>
        <label>1</label>
    </ligand>
</feature>
<feature type="binding site" evidence="3">
    <location>
        <position position="48"/>
    </location>
    <ligand>
        <name>[2Fe-2S] cluster</name>
        <dbReference type="ChEBI" id="CHEBI:190135"/>
        <label>1</label>
    </ligand>
</feature>
<feature type="binding site" evidence="3">
    <location>
        <position position="51"/>
    </location>
    <ligand>
        <name>[2Fe-2S] cluster</name>
        <dbReference type="ChEBI" id="CHEBI:190135"/>
        <label>1</label>
    </ligand>
</feature>
<feature type="binding site" evidence="1">
    <location>
        <position position="73"/>
    </location>
    <ligand>
        <name>[2Fe-2S] cluster</name>
        <dbReference type="ChEBI" id="CHEBI:190135"/>
        <label>1</label>
    </ligand>
</feature>
<feature type="binding site" evidence="1">
    <location>
        <position position="113"/>
    </location>
    <ligand>
        <name>[2Fe-2S] cluster</name>
        <dbReference type="ChEBI" id="CHEBI:190135"/>
        <label>2</label>
    </ligand>
</feature>
<feature type="binding site" evidence="1">
    <location>
        <position position="116"/>
    </location>
    <ligand>
        <name>[2Fe-2S] cluster</name>
        <dbReference type="ChEBI" id="CHEBI:190135"/>
        <label>2</label>
    </ligand>
</feature>
<feature type="binding site" evidence="1">
    <location>
        <position position="155"/>
    </location>
    <ligand>
        <name>[2Fe-2S] cluster</name>
        <dbReference type="ChEBI" id="CHEBI:190135"/>
        <label>2</label>
    </ligand>
</feature>
<feature type="binding site" evidence="1">
    <location>
        <position position="157"/>
    </location>
    <ligand>
        <name>[2Fe-2S] cluster</name>
        <dbReference type="ChEBI" id="CHEBI:190135"/>
        <label>2</label>
    </ligand>
</feature>
<feature type="binding site" evidence="1">
    <location>
        <begin position="259"/>
        <end position="266"/>
    </location>
    <ligand>
        <name>FAD</name>
        <dbReference type="ChEBI" id="CHEBI:57692"/>
    </ligand>
</feature>
<feature type="binding site" evidence="1">
    <location>
        <begin position="342"/>
        <end position="346"/>
    </location>
    <ligand>
        <name>FAD</name>
        <dbReference type="ChEBI" id="CHEBI:57692"/>
    </ligand>
</feature>
<feature type="binding site" evidence="1">
    <location>
        <position position="358"/>
    </location>
    <ligand>
        <name>FAD</name>
        <dbReference type="ChEBI" id="CHEBI:57692"/>
    </ligand>
</feature>
<feature type="binding site" evidence="1">
    <location>
        <position position="399"/>
    </location>
    <ligand>
        <name>FAD</name>
        <dbReference type="ChEBI" id="CHEBI:57692"/>
    </ligand>
</feature>
<feature type="binding site" evidence="1">
    <location>
        <position position="771"/>
    </location>
    <ligand>
        <name>Mo-molybdopterin</name>
        <dbReference type="ChEBI" id="CHEBI:71302"/>
    </ligand>
    <ligandPart>
        <name>Mo</name>
        <dbReference type="ChEBI" id="CHEBI:28685"/>
    </ligandPart>
</feature>
<feature type="binding site" evidence="1">
    <location>
        <position position="802"/>
    </location>
    <ligand>
        <name>Mo-molybdopterin</name>
        <dbReference type="ChEBI" id="CHEBI:71302"/>
    </ligand>
    <ligandPart>
        <name>Mo</name>
        <dbReference type="ChEBI" id="CHEBI:28685"/>
    </ligandPart>
</feature>
<feature type="binding site" evidence="1">
    <location>
        <position position="915"/>
    </location>
    <ligand>
        <name>Mo-molybdopterin</name>
        <dbReference type="ChEBI" id="CHEBI:71302"/>
    </ligand>
    <ligandPart>
        <name>Mo</name>
        <dbReference type="ChEBI" id="CHEBI:28685"/>
    </ligandPart>
</feature>
<feature type="sequence conflict" description="In Ref. 4; AAC39511." evidence="11" ref="4">
    <original>V</original>
    <variation>I</variation>
    <location>
        <position position="1257"/>
    </location>
</feature>
<keyword id="KW-0001">2Fe-2S</keyword>
<keyword id="KW-0937">Abscisic acid biosynthesis</keyword>
<keyword id="KW-0073">Auxin biosynthesis</keyword>
<keyword id="KW-0963">Cytoplasm</keyword>
<keyword id="KW-0274">FAD</keyword>
<keyword id="KW-0285">Flavoprotein</keyword>
<keyword id="KW-0408">Iron</keyword>
<keyword id="KW-0411">Iron-sulfur</keyword>
<keyword id="KW-0479">Metal-binding</keyword>
<keyword id="KW-0500">Molybdenum</keyword>
<keyword id="KW-0520">NAD</keyword>
<keyword id="KW-0560">Oxidoreductase</keyword>
<keyword id="KW-1185">Reference proteome</keyword>
<protein>
    <recommendedName>
        <fullName evidence="9">Aldehyde oxidase 4</fullName>
        <shortName evidence="9">AO-4</shortName>
        <shortName evidence="9">AtAO-4</shortName>
        <shortName evidence="10">AtAO2</shortName>
        <ecNumber evidence="7 8">1.2.3.1</ecNumber>
    </recommendedName>
    <alternativeName>
        <fullName evidence="12">Benzaldehyde oxidase</fullName>
    </alternativeName>
    <alternativeName>
        <fullName evidence="12">Indole-3-acetaldehyde oxidase</fullName>
        <shortName evidence="12">IAA oxidase</shortName>
        <ecNumber evidence="7">1.2.3.7</ecNumber>
    </alternativeName>
</protein>
<organism>
    <name type="scientific">Arabidopsis thaliana</name>
    <name type="common">Mouse-ear cress</name>
    <dbReference type="NCBI Taxonomy" id="3702"/>
    <lineage>
        <taxon>Eukaryota</taxon>
        <taxon>Viridiplantae</taxon>
        <taxon>Streptophyta</taxon>
        <taxon>Embryophyta</taxon>
        <taxon>Tracheophyta</taxon>
        <taxon>Spermatophyta</taxon>
        <taxon>Magnoliopsida</taxon>
        <taxon>eudicotyledons</taxon>
        <taxon>Gunneridae</taxon>
        <taxon>Pentapetalae</taxon>
        <taxon>rosids</taxon>
        <taxon>malvids</taxon>
        <taxon>Brassicales</taxon>
        <taxon>Brassicaceae</taxon>
        <taxon>Camelineae</taxon>
        <taxon>Arabidopsis</taxon>
    </lineage>
</organism>
<name>ALDO4_ARATH</name>
<comment type="function">
    <text evidence="7 8">Aldehyde oxidase with a broad substrate specificity (PubMed:28188272). Involved in the accumulation of benzoic acid (BA) in siliques (PubMed:19297586). Delays and protects siliques from senescence by catalyzing aldehyde detoxification in siliques. Catalyzes the oxidation of an array of aromatic and aliphatic aldehydes, including vanillin and the reactive carbonyl species (RCS) acrolein, 4-hydroxyl-2-nonenal (HNE), and malondialdehyde (MDA) (PubMed:28188272).</text>
</comment>
<comment type="catalytic activity">
    <reaction evidence="7">
        <text>indole-3-acetaldehyde + O2 + H2O = (indol-3-yl)acetate + H2O2 + H(+)</text>
        <dbReference type="Rhea" id="RHEA:16277"/>
        <dbReference type="ChEBI" id="CHEBI:15377"/>
        <dbReference type="ChEBI" id="CHEBI:15378"/>
        <dbReference type="ChEBI" id="CHEBI:15379"/>
        <dbReference type="ChEBI" id="CHEBI:16240"/>
        <dbReference type="ChEBI" id="CHEBI:18086"/>
        <dbReference type="ChEBI" id="CHEBI:30854"/>
        <dbReference type="EC" id="1.2.3.7"/>
    </reaction>
</comment>
<comment type="catalytic activity">
    <reaction evidence="7 8">
        <text>an aldehyde + O2 + H2O = a carboxylate + H2O2 + H(+)</text>
        <dbReference type="Rhea" id="RHEA:16829"/>
        <dbReference type="ChEBI" id="CHEBI:15377"/>
        <dbReference type="ChEBI" id="CHEBI:15378"/>
        <dbReference type="ChEBI" id="CHEBI:15379"/>
        <dbReference type="ChEBI" id="CHEBI:16240"/>
        <dbReference type="ChEBI" id="CHEBI:17478"/>
        <dbReference type="ChEBI" id="CHEBI:29067"/>
        <dbReference type="EC" id="1.2.3.1"/>
    </reaction>
</comment>
<comment type="catalytic activity">
    <reaction evidence="7 8">
        <text>benzaldehyde + O2 + H2O = benzoate + H2O2 + H(+)</text>
        <dbReference type="Rhea" id="RHEA:58960"/>
        <dbReference type="ChEBI" id="CHEBI:15377"/>
        <dbReference type="ChEBI" id="CHEBI:15378"/>
        <dbReference type="ChEBI" id="CHEBI:15379"/>
        <dbReference type="ChEBI" id="CHEBI:16150"/>
        <dbReference type="ChEBI" id="CHEBI:16240"/>
        <dbReference type="ChEBI" id="CHEBI:17169"/>
    </reaction>
</comment>
<comment type="catalytic activity">
    <reaction evidence="8">
        <text>hexanal + O2 + H2O = hexanoate + H2O2 + H(+)</text>
        <dbReference type="Rhea" id="RHEA:58964"/>
        <dbReference type="ChEBI" id="CHEBI:15377"/>
        <dbReference type="ChEBI" id="CHEBI:15378"/>
        <dbReference type="ChEBI" id="CHEBI:15379"/>
        <dbReference type="ChEBI" id="CHEBI:16240"/>
        <dbReference type="ChEBI" id="CHEBI:17120"/>
        <dbReference type="ChEBI" id="CHEBI:88528"/>
    </reaction>
</comment>
<comment type="catalytic activity">
    <reaction evidence="8">
        <text>1-naphthaldehyde + O2 + H2O = 1-naphthoate + H2O2 + H(+)</text>
        <dbReference type="Rhea" id="RHEA:58968"/>
        <dbReference type="ChEBI" id="CHEBI:15377"/>
        <dbReference type="ChEBI" id="CHEBI:15378"/>
        <dbReference type="ChEBI" id="CHEBI:15379"/>
        <dbReference type="ChEBI" id="CHEBI:16240"/>
        <dbReference type="ChEBI" id="CHEBI:36298"/>
        <dbReference type="ChEBI" id="CHEBI:52367"/>
    </reaction>
</comment>
<comment type="catalytic activity">
    <reaction evidence="8">
        <text>vanillin + O2 + H2O = vanillate + H2O2 + H(+)</text>
        <dbReference type="Rhea" id="RHEA:58972"/>
        <dbReference type="ChEBI" id="CHEBI:15377"/>
        <dbReference type="ChEBI" id="CHEBI:15378"/>
        <dbReference type="ChEBI" id="CHEBI:15379"/>
        <dbReference type="ChEBI" id="CHEBI:16240"/>
        <dbReference type="ChEBI" id="CHEBI:16632"/>
        <dbReference type="ChEBI" id="CHEBI:18346"/>
    </reaction>
</comment>
<comment type="catalytic activity">
    <reaction evidence="8">
        <text>malonaldehyde + O2 + H2O = 3-oxopropanoate + H2O2 + H(+)</text>
        <dbReference type="Rhea" id="RHEA:58976"/>
        <dbReference type="ChEBI" id="CHEBI:15377"/>
        <dbReference type="ChEBI" id="CHEBI:15378"/>
        <dbReference type="ChEBI" id="CHEBI:15379"/>
        <dbReference type="ChEBI" id="CHEBI:16240"/>
        <dbReference type="ChEBI" id="CHEBI:33190"/>
        <dbReference type="ChEBI" id="CHEBI:566274"/>
    </reaction>
</comment>
<comment type="catalytic activity">
    <reaction evidence="8">
        <text>citral + O2 + H2O = 3,7-dimethylocta-2,6-dienoate + H2O2 + H(+)</text>
        <dbReference type="Rhea" id="RHEA:58980"/>
        <dbReference type="ChEBI" id="CHEBI:15377"/>
        <dbReference type="ChEBI" id="CHEBI:15378"/>
        <dbReference type="ChEBI" id="CHEBI:15379"/>
        <dbReference type="ChEBI" id="CHEBI:16240"/>
        <dbReference type="ChEBI" id="CHEBI:23316"/>
        <dbReference type="ChEBI" id="CHEBI:142930"/>
    </reaction>
</comment>
<comment type="catalytic activity">
    <reaction evidence="8">
        <text>acrolein + O2 + H2O = acrylate + H2O2 + H(+)</text>
        <dbReference type="Rhea" id="RHEA:58984"/>
        <dbReference type="ChEBI" id="CHEBI:15368"/>
        <dbReference type="ChEBI" id="CHEBI:15377"/>
        <dbReference type="ChEBI" id="CHEBI:15378"/>
        <dbReference type="ChEBI" id="CHEBI:15379"/>
        <dbReference type="ChEBI" id="CHEBI:16240"/>
        <dbReference type="ChEBI" id="CHEBI:37080"/>
    </reaction>
</comment>
<comment type="catalytic activity">
    <reaction evidence="8">
        <text>(E)-4-hydroxynon-2-enal + O2 + H2O = (E)-4-hydroxynon-2-enoate + H2O2 + H(+)</text>
        <dbReference type="Rhea" id="RHEA:58988"/>
        <dbReference type="ChEBI" id="CHEBI:15377"/>
        <dbReference type="ChEBI" id="CHEBI:15378"/>
        <dbReference type="ChEBI" id="CHEBI:15379"/>
        <dbReference type="ChEBI" id="CHEBI:16240"/>
        <dbReference type="ChEBI" id="CHEBI:58968"/>
        <dbReference type="ChEBI" id="CHEBI:142920"/>
    </reaction>
</comment>
<comment type="catalytic activity">
    <reaction evidence="8">
        <text>(E)-cinnamaldehyde + O2 + H2O = (E)-cinnamate + H2O2 + H(+)</text>
        <dbReference type="Rhea" id="RHEA:58992"/>
        <dbReference type="ChEBI" id="CHEBI:15377"/>
        <dbReference type="ChEBI" id="CHEBI:15378"/>
        <dbReference type="ChEBI" id="CHEBI:15379"/>
        <dbReference type="ChEBI" id="CHEBI:15669"/>
        <dbReference type="ChEBI" id="CHEBI:16240"/>
        <dbReference type="ChEBI" id="CHEBI:16731"/>
    </reaction>
</comment>
<comment type="catalytic activity">
    <reaction evidence="8">
        <text>indole-3-carbaldehyde + O2 + H2O = indole-3-carboxylate + H2O2 + H(+)</text>
        <dbReference type="Rhea" id="RHEA:58996"/>
        <dbReference type="ChEBI" id="CHEBI:15377"/>
        <dbReference type="ChEBI" id="CHEBI:15378"/>
        <dbReference type="ChEBI" id="CHEBI:15379"/>
        <dbReference type="ChEBI" id="CHEBI:16240"/>
        <dbReference type="ChEBI" id="CHEBI:28238"/>
        <dbReference type="ChEBI" id="CHEBI:62448"/>
    </reaction>
</comment>
<comment type="catalytic activity">
    <reaction evidence="8">
        <text>propanal + O2 + H2O = propanoate + H2O2 + H(+)</text>
        <dbReference type="Rhea" id="RHEA:59000"/>
        <dbReference type="ChEBI" id="CHEBI:15377"/>
        <dbReference type="ChEBI" id="CHEBI:15378"/>
        <dbReference type="ChEBI" id="CHEBI:15379"/>
        <dbReference type="ChEBI" id="CHEBI:16240"/>
        <dbReference type="ChEBI" id="CHEBI:17153"/>
        <dbReference type="ChEBI" id="CHEBI:17272"/>
    </reaction>
</comment>
<comment type="catalytic activity">
    <reaction evidence="8">
        <text>dodecanal + O2 + H2O = dodecanoate + H2O2 + H(+)</text>
        <dbReference type="Rhea" id="RHEA:59004"/>
        <dbReference type="ChEBI" id="CHEBI:15377"/>
        <dbReference type="ChEBI" id="CHEBI:15378"/>
        <dbReference type="ChEBI" id="CHEBI:15379"/>
        <dbReference type="ChEBI" id="CHEBI:16240"/>
        <dbReference type="ChEBI" id="CHEBI:18262"/>
        <dbReference type="ChEBI" id="CHEBI:27836"/>
    </reaction>
</comment>
<comment type="catalytic activity">
    <reaction evidence="8">
        <text>salicylaldehyde + O2 + H2O = salicylate + H2O2 + H(+)</text>
        <dbReference type="Rhea" id="RHEA:59008"/>
        <dbReference type="ChEBI" id="CHEBI:15377"/>
        <dbReference type="ChEBI" id="CHEBI:15378"/>
        <dbReference type="ChEBI" id="CHEBI:15379"/>
        <dbReference type="ChEBI" id="CHEBI:16008"/>
        <dbReference type="ChEBI" id="CHEBI:16240"/>
        <dbReference type="ChEBI" id="CHEBI:30762"/>
    </reaction>
</comment>
<comment type="cofactor">
    <cofactor evidence="1">
        <name>[2Fe-2S] cluster</name>
        <dbReference type="ChEBI" id="CHEBI:190135"/>
    </cofactor>
    <text evidence="1">Binds 2 [2Fe-2S] clusters.</text>
</comment>
<comment type="cofactor">
    <cofactor evidence="1">
        <name>FAD</name>
        <dbReference type="ChEBI" id="CHEBI:57692"/>
    </cofactor>
</comment>
<comment type="cofactor">
    <cofactor evidence="1">
        <name>Mo-molybdopterin</name>
        <dbReference type="ChEBI" id="CHEBI:71302"/>
    </cofactor>
    <text evidence="1">Binds 1 Mo-molybdopterin (Mo-MPT) cofactor per subunit.</text>
</comment>
<comment type="activity regulation">
    <text evidence="7">Inhibited by Cu(2+).</text>
</comment>
<comment type="biophysicochemical properties">
    <kinetics>
        <KM evidence="7">23 uM for benzoic acid (BA) (at pH7, in the presence of NAD(+))</KM>
        <KM evidence="7">2.07 uM for indole-3-acetaldehyde (at pH7)</KM>
        <KM evidence="7">103.9 uM for cinnamylaldehyde (at pH7)</KM>
        <Vmax evidence="7">1.2 nmol/sec/mg enzyme with benzoic acid (BA) as substrate (at pH7, in the presence of NAD(+))</Vmax>
        <Vmax evidence="7">1.5 nmol/sec/mg enzyme with indole-3-acetaldehyde as substrate (at pH7)</Vmax>
        <Vmax evidence="7">5.5 nmol/sec/mg enzyme with cinnamylaldehyde as substrate (at pH7)</Vmax>
        <text>kcat is 95.2 sec(-1) with benzoic acid (BA) as substrate, 1.904 sec(-1) with indole-3-acetaldehyde as substrate, and 436.5 sec(-1) with cinnamylaldehyde as substrate (at pH 7, PubMed:19297586).</text>
    </kinetics>
    <phDependence>
        <text evidence="7">Optimum pH is 7.</text>
    </phDependence>
    <temperatureDependence>
        <text evidence="7">Optimum temperature is 30 degrees Celsius.</text>
    </temperatureDependence>
</comment>
<comment type="subunit">
    <text evidence="2">Aldehyde oxidases (AO) are homodimers and heterodimers of AO subunits.</text>
</comment>
<comment type="subcellular location">
    <subcellularLocation>
        <location evidence="12">Cytoplasm</location>
    </subcellularLocation>
</comment>
<comment type="tissue specificity">
    <text evidence="5 6 8">Transcripts expressed at high levels in developing siliques and at low levels in dry seeds.</text>
</comment>
<comment type="induction">
    <text evidence="5 8">Induced by dehydration, in rosette leaves but not in roots (PubMed:10972874, PubMed:28188272). Induced by hydrogen peroxide H(2)O(2) and aldehyde treatment (PubMed:28188272).</text>
</comment>
<comment type="disruption phenotype">
    <text evidence="6 7 8">Plants have normal abscisic acid (ABA) levels, normal germination and are not affected in abscisic aldehyde oxidase activity in siliques, dry seeds and leaves. Reduced levels of benzoic acid (BA), 3-benzoyloxypropylglucosinolate and 4-benzoyloxybutylglucosinolate in seeds. Senesced siliques accumulate high endogenous reactive carbonyl species (RCS) levels associated with enhanced senescence molecular markers, have an increased chlorophyll degradation, and exhibit early seed shattering. Severe tissue damage and enhanced malondialdehyde levels and senescence symptoms in siliques treated with several aldehydes. Increased endogenous reactive carbonyl species (RCS) and higher expression levels of senescence marker genes, leading to premature siliques senescence in response to abiotic stresses such as dark and ultraviolet C irradiation (PubMed:28188272).</text>
</comment>
<comment type="similarity">
    <text evidence="11">Belongs to the xanthine dehydrogenase family.</text>
</comment>
<comment type="sequence caution" evidence="11">
    <conflict type="erroneous gene model prediction">
        <sequence resource="EMBL-CDS" id="AAB80640"/>
    </conflict>
</comment>
<evidence type="ECO:0000250" key="1">
    <source>
        <dbReference type="UniProtKB" id="P80457"/>
    </source>
</evidence>
<evidence type="ECO:0000250" key="2">
    <source>
        <dbReference type="UniProtKB" id="Q7G193"/>
    </source>
</evidence>
<evidence type="ECO:0000255" key="3">
    <source>
        <dbReference type="PROSITE-ProRule" id="PRU00465"/>
    </source>
</evidence>
<evidence type="ECO:0000255" key="4">
    <source>
        <dbReference type="PROSITE-ProRule" id="PRU00718"/>
    </source>
</evidence>
<evidence type="ECO:0000269" key="5">
    <source>
    </source>
</evidence>
<evidence type="ECO:0000269" key="6">
    <source>
    </source>
</evidence>
<evidence type="ECO:0000269" key="7">
    <source>
    </source>
</evidence>
<evidence type="ECO:0000269" key="8">
    <source>
    </source>
</evidence>
<evidence type="ECO:0000303" key="9">
    <source>
    </source>
</evidence>
<evidence type="ECO:0000303" key="10">
    <source>
    </source>
</evidence>
<evidence type="ECO:0000305" key="11"/>
<evidence type="ECO:0000305" key="12">
    <source>
    </source>
</evidence>
<evidence type="ECO:0000312" key="13">
    <source>
        <dbReference type="Araport" id="AT1G04580"/>
    </source>
</evidence>
<evidence type="ECO:0000312" key="14">
    <source>
        <dbReference type="EMBL" id="AAB80640.1"/>
    </source>
</evidence>
<reference key="1">
    <citation type="submission" date="2000-01" db="EMBL/GenBank/DDBJ databases">
        <title>Arabidopsis aldehyde oxidase cDNA.</title>
        <authorList>
            <person name="Seo M."/>
            <person name="Koshiba T."/>
        </authorList>
    </citation>
    <scope>NUCLEOTIDE SEQUENCE [MRNA]</scope>
    <source>
        <strain>cv. Columbia</strain>
        <tissue>Rosette leaf</tissue>
    </source>
</reference>
<reference key="2">
    <citation type="journal article" date="2000" name="Nature">
        <title>Sequence and analysis of chromosome 1 of the plant Arabidopsis thaliana.</title>
        <authorList>
            <person name="Theologis A."/>
            <person name="Ecker J.R."/>
            <person name="Palm C.J."/>
            <person name="Federspiel N.A."/>
            <person name="Kaul S."/>
            <person name="White O."/>
            <person name="Alonso J."/>
            <person name="Altafi H."/>
            <person name="Araujo R."/>
            <person name="Bowman C.L."/>
            <person name="Brooks S.Y."/>
            <person name="Buehler E."/>
            <person name="Chan A."/>
            <person name="Chao Q."/>
            <person name="Chen H."/>
            <person name="Cheuk R.F."/>
            <person name="Chin C.W."/>
            <person name="Chung M.K."/>
            <person name="Conn L."/>
            <person name="Conway A.B."/>
            <person name="Conway A.R."/>
            <person name="Creasy T.H."/>
            <person name="Dewar K."/>
            <person name="Dunn P."/>
            <person name="Etgu P."/>
            <person name="Feldblyum T.V."/>
            <person name="Feng J.-D."/>
            <person name="Fong B."/>
            <person name="Fujii C.Y."/>
            <person name="Gill J.E."/>
            <person name="Goldsmith A.D."/>
            <person name="Haas B."/>
            <person name="Hansen N.F."/>
            <person name="Hughes B."/>
            <person name="Huizar L."/>
            <person name="Hunter J.L."/>
            <person name="Jenkins J."/>
            <person name="Johnson-Hopson C."/>
            <person name="Khan S."/>
            <person name="Khaykin E."/>
            <person name="Kim C.J."/>
            <person name="Koo H.L."/>
            <person name="Kremenetskaia I."/>
            <person name="Kurtz D.B."/>
            <person name="Kwan A."/>
            <person name="Lam B."/>
            <person name="Langin-Hooper S."/>
            <person name="Lee A."/>
            <person name="Lee J.M."/>
            <person name="Lenz C.A."/>
            <person name="Li J.H."/>
            <person name="Li Y.-P."/>
            <person name="Lin X."/>
            <person name="Liu S.X."/>
            <person name="Liu Z.A."/>
            <person name="Luros J.S."/>
            <person name="Maiti R."/>
            <person name="Marziali A."/>
            <person name="Militscher J."/>
            <person name="Miranda M."/>
            <person name="Nguyen M."/>
            <person name="Nierman W.C."/>
            <person name="Osborne B.I."/>
            <person name="Pai G."/>
            <person name="Peterson J."/>
            <person name="Pham P.K."/>
            <person name="Rizzo M."/>
            <person name="Rooney T."/>
            <person name="Rowley D."/>
            <person name="Sakano H."/>
            <person name="Salzberg S.L."/>
            <person name="Schwartz J.R."/>
            <person name="Shinn P."/>
            <person name="Southwick A.M."/>
            <person name="Sun H."/>
            <person name="Tallon L.J."/>
            <person name="Tambunga G."/>
            <person name="Toriumi M.J."/>
            <person name="Town C.D."/>
            <person name="Utterback T."/>
            <person name="Van Aken S."/>
            <person name="Vaysberg M."/>
            <person name="Vysotskaia V.S."/>
            <person name="Walker M."/>
            <person name="Wu D."/>
            <person name="Yu G."/>
            <person name="Fraser C.M."/>
            <person name="Venter J.C."/>
            <person name="Davis R.W."/>
        </authorList>
    </citation>
    <scope>NUCLEOTIDE SEQUENCE [LARGE SCALE GENOMIC DNA]</scope>
    <source>
        <strain>cv. Columbia</strain>
    </source>
</reference>
<reference key="3">
    <citation type="journal article" date="2017" name="Plant J.">
        <title>Araport11: a complete reannotation of the Arabidopsis thaliana reference genome.</title>
        <authorList>
            <person name="Cheng C.Y."/>
            <person name="Krishnakumar V."/>
            <person name="Chan A.P."/>
            <person name="Thibaud-Nissen F."/>
            <person name="Schobel S."/>
            <person name="Town C.D."/>
        </authorList>
    </citation>
    <scope>GENOME REANNOTATION</scope>
    <source>
        <strain>cv. Columbia</strain>
    </source>
</reference>
<reference key="4">
    <citation type="journal article" date="1998" name="Biochim. Biophys. Acta">
        <title>Biochemical and genetic characterization of three molybdenum cofactor hydroxylases in Arabidopsis thaliana.</title>
        <authorList>
            <person name="Hoff T."/>
            <person name="Frandsen G.I."/>
            <person name="Rocher A."/>
            <person name="Mundy J."/>
        </authorList>
    </citation>
    <scope>NUCLEOTIDE SEQUENCE [MRNA] OF 1082-1337</scope>
    <source>
        <strain>cv. Wassilewskija</strain>
        <tissue>Root</tissue>
    </source>
</reference>
<reference key="5">
    <citation type="journal article" date="2000" name="Plant J.">
        <title>Abscisic aldehyde oxidase in leaves of Arabidopsis thaliana.</title>
        <authorList>
            <person name="Seo M."/>
            <person name="Koiwai H."/>
            <person name="Akaba S."/>
            <person name="Komano T."/>
            <person name="Oritani T."/>
            <person name="Kamiya Y."/>
            <person name="Koshiba T."/>
        </authorList>
    </citation>
    <scope>INDUCTION</scope>
    <scope>TISSUE SPECIFICITY</scope>
</reference>
<reference key="6">
    <citation type="journal article" date="2004" name="Plant Cell Physiol.">
        <title>Comparative studies on the Arabidopsis aldehyde oxidase (AAO) gene family revealed a major role of AAO3 in ABA biosynthesis in seeds.</title>
        <authorList>
            <person name="Seo M."/>
            <person name="Aoki H."/>
            <person name="Koiwai H."/>
            <person name="Kamiya Y."/>
            <person name="Nambara E."/>
            <person name="Koshiba T."/>
        </authorList>
    </citation>
    <scope>TISSUE SPECIFICITY</scope>
    <scope>DISRUPTION PHENOTYPE</scope>
</reference>
<reference key="7">
    <citation type="journal article" date="2009" name="Plant Physiol.">
        <title>An aldehyde oxidase in developing seeds of Arabidopsis converts benzaldehyde to benzoic Acid.</title>
        <authorList>
            <person name="Ibdah M."/>
            <person name="Chen Y.-T."/>
            <person name="Wilkerson C.G."/>
            <person name="Pichersky E."/>
        </authorList>
    </citation>
    <scope>FUNCTION</scope>
    <scope>DISRUPTION PHENOTYPE</scope>
    <scope>CATALYTIC ACTIVITY</scope>
    <scope>BIOPHYSICOCHEMICAL PROPERTIES</scope>
    <scope>SUBCELLULAR LOCATION</scope>
    <scope>ACTIVITY REGULATION</scope>
    <source>
        <strain>cv. Columbia</strain>
    </source>
</reference>
<reference key="8">
    <citation type="journal article" date="2017" name="Plant Physiol.">
        <title>Aldehyde oxidase 4 plays a critical role in delaying silique senescence by catalyzing aldehyde detoxification.</title>
        <authorList>
            <person name="Srivastava S."/>
            <person name="Brychkova G."/>
            <person name="Yarmolinsky D."/>
            <person name="Soltabayeva A."/>
            <person name="Samani T."/>
            <person name="Sagi M."/>
        </authorList>
    </citation>
    <scope>FUNCTION</scope>
    <scope>DISRUPTION PHENOTYPE</scope>
    <scope>INDUCTION BY ALDEHYDE; HYDROGEN PEROXIDE AND DEHYDRATION</scope>
    <scope>CATALYTIC ACTIVITY</scope>
</reference>